<proteinExistence type="inferred from homology"/>
<accession>A9HBI8</accession>
<accession>B5ZGL8</accession>
<dbReference type="EC" id="2.4.99.17" evidence="1"/>
<dbReference type="EMBL" id="AM889285">
    <property type="protein sequence ID" value="CAP54819.1"/>
    <property type="molecule type" value="Genomic_DNA"/>
</dbReference>
<dbReference type="EMBL" id="CP001189">
    <property type="protein sequence ID" value="ACI50926.1"/>
    <property type="molecule type" value="Genomic_DNA"/>
</dbReference>
<dbReference type="RefSeq" id="WP_012223662.1">
    <property type="nucleotide sequence ID" value="NC_010125.1"/>
</dbReference>
<dbReference type="RefSeq" id="WP_012553617.1">
    <property type="nucleotide sequence ID" value="NC_011365.1"/>
</dbReference>
<dbReference type="SMR" id="A9HBI8"/>
<dbReference type="STRING" id="272568.GDI0876"/>
<dbReference type="KEGG" id="gdi:GDI0876"/>
<dbReference type="KEGG" id="gdj:Gdia_1143"/>
<dbReference type="eggNOG" id="COG0809">
    <property type="taxonomic scope" value="Bacteria"/>
</dbReference>
<dbReference type="HOGENOM" id="CLU_039110_1_1_5"/>
<dbReference type="OrthoDB" id="9805933at2"/>
<dbReference type="UniPathway" id="UPA00392"/>
<dbReference type="Proteomes" id="UP000001176">
    <property type="component" value="Chromosome"/>
</dbReference>
<dbReference type="GO" id="GO:0005737">
    <property type="term" value="C:cytoplasm"/>
    <property type="evidence" value="ECO:0007669"/>
    <property type="project" value="UniProtKB-SubCell"/>
</dbReference>
<dbReference type="GO" id="GO:0051075">
    <property type="term" value="F:S-adenosylmethionine:tRNA ribosyltransferase-isomerase activity"/>
    <property type="evidence" value="ECO:0007669"/>
    <property type="project" value="UniProtKB-EC"/>
</dbReference>
<dbReference type="GO" id="GO:0008616">
    <property type="term" value="P:queuosine biosynthetic process"/>
    <property type="evidence" value="ECO:0007669"/>
    <property type="project" value="UniProtKB-UniRule"/>
</dbReference>
<dbReference type="GO" id="GO:0002099">
    <property type="term" value="P:tRNA wobble guanine modification"/>
    <property type="evidence" value="ECO:0007669"/>
    <property type="project" value="TreeGrafter"/>
</dbReference>
<dbReference type="FunFam" id="3.40.1780.10:FF:000001">
    <property type="entry name" value="S-adenosylmethionine:tRNA ribosyltransferase-isomerase"/>
    <property type="match status" value="1"/>
</dbReference>
<dbReference type="Gene3D" id="2.40.10.240">
    <property type="entry name" value="QueA-like"/>
    <property type="match status" value="1"/>
</dbReference>
<dbReference type="Gene3D" id="3.40.1780.10">
    <property type="entry name" value="QueA-like"/>
    <property type="match status" value="2"/>
</dbReference>
<dbReference type="HAMAP" id="MF_00113">
    <property type="entry name" value="QueA"/>
    <property type="match status" value="1"/>
</dbReference>
<dbReference type="InterPro" id="IPR003699">
    <property type="entry name" value="QueA"/>
</dbReference>
<dbReference type="InterPro" id="IPR042118">
    <property type="entry name" value="QueA_dom1"/>
</dbReference>
<dbReference type="InterPro" id="IPR042119">
    <property type="entry name" value="QueA_dom2"/>
</dbReference>
<dbReference type="InterPro" id="IPR036100">
    <property type="entry name" value="QueA_sf"/>
</dbReference>
<dbReference type="NCBIfam" id="NF001140">
    <property type="entry name" value="PRK00147.1"/>
    <property type="match status" value="1"/>
</dbReference>
<dbReference type="NCBIfam" id="TIGR00113">
    <property type="entry name" value="queA"/>
    <property type="match status" value="1"/>
</dbReference>
<dbReference type="PANTHER" id="PTHR30307">
    <property type="entry name" value="S-ADENOSYLMETHIONINE:TRNA RIBOSYLTRANSFERASE-ISOMERASE"/>
    <property type="match status" value="1"/>
</dbReference>
<dbReference type="PANTHER" id="PTHR30307:SF0">
    <property type="entry name" value="S-ADENOSYLMETHIONINE:TRNA RIBOSYLTRANSFERASE-ISOMERASE"/>
    <property type="match status" value="1"/>
</dbReference>
<dbReference type="Pfam" id="PF02547">
    <property type="entry name" value="Queuosine_synth"/>
    <property type="match status" value="1"/>
</dbReference>
<dbReference type="SUPFAM" id="SSF111337">
    <property type="entry name" value="QueA-like"/>
    <property type="match status" value="1"/>
</dbReference>
<protein>
    <recommendedName>
        <fullName evidence="1">S-adenosylmethionine:tRNA ribosyltransferase-isomerase</fullName>
        <ecNumber evidence="1">2.4.99.17</ecNumber>
    </recommendedName>
    <alternativeName>
        <fullName evidence="1">Queuosine biosynthesis protein QueA</fullName>
    </alternativeName>
</protein>
<name>QUEA_GLUDA</name>
<keyword id="KW-0963">Cytoplasm</keyword>
<keyword id="KW-0671">Queuosine biosynthesis</keyword>
<keyword id="KW-1185">Reference proteome</keyword>
<keyword id="KW-0949">S-adenosyl-L-methionine</keyword>
<keyword id="KW-0808">Transferase</keyword>
<comment type="function">
    <text evidence="1">Transfers and isomerizes the ribose moiety from AdoMet to the 7-aminomethyl group of 7-deazaguanine (preQ1-tRNA) to give epoxyqueuosine (oQ-tRNA).</text>
</comment>
<comment type="catalytic activity">
    <reaction evidence="1">
        <text>7-aminomethyl-7-carbaguanosine(34) in tRNA + S-adenosyl-L-methionine = epoxyqueuosine(34) in tRNA + adenine + L-methionine + 2 H(+)</text>
        <dbReference type="Rhea" id="RHEA:32155"/>
        <dbReference type="Rhea" id="RHEA-COMP:10342"/>
        <dbReference type="Rhea" id="RHEA-COMP:18582"/>
        <dbReference type="ChEBI" id="CHEBI:15378"/>
        <dbReference type="ChEBI" id="CHEBI:16708"/>
        <dbReference type="ChEBI" id="CHEBI:57844"/>
        <dbReference type="ChEBI" id="CHEBI:59789"/>
        <dbReference type="ChEBI" id="CHEBI:82833"/>
        <dbReference type="ChEBI" id="CHEBI:194443"/>
        <dbReference type="EC" id="2.4.99.17"/>
    </reaction>
</comment>
<comment type="pathway">
    <text evidence="1">tRNA modification; tRNA-queuosine biosynthesis.</text>
</comment>
<comment type="subunit">
    <text evidence="1">Monomer.</text>
</comment>
<comment type="subcellular location">
    <subcellularLocation>
        <location evidence="1">Cytoplasm</location>
    </subcellularLocation>
</comment>
<comment type="similarity">
    <text evidence="1">Belongs to the QueA family.</text>
</comment>
<gene>
    <name evidence="1" type="primary">queA</name>
    <name type="ordered locus">GDI0876</name>
    <name type="ordered locus">Gdia_1143</name>
</gene>
<feature type="chain" id="PRO_1000076007" description="S-adenosylmethionine:tRNA ribosyltransferase-isomerase">
    <location>
        <begin position="1"/>
        <end position="355"/>
    </location>
</feature>
<feature type="sequence conflict" description="In Ref. 2; ACI50926." evidence="2" ref="2">
    <original>V</original>
    <variation>A</variation>
    <location>
        <position position="349"/>
    </location>
</feature>
<sequence length="355" mass="37980">MTDLASDFDFDLPPALIAEHPARPRDSARLLDIPAAGPFHDRIVRDLPSLLRPGDLLVANDTAVIPAQLDARRGEARIGITLDRILPDGTWHALARNARRLRAGDVLTFPGTPNTAAVISRDDEGGVVLRFDTEGAAFDAFLQAAGVLALPPYIARPFGPTEQDRVDYATIFSAHRGAVAAPTAGLHFTPDLLAALDAAGVGRCTLTLHVGAGTFLPVRGDSIAAHRMHAERGVITAETADAINAARRAGGRIVAVGTTSLRLLESAADPDGTIRPFDGDTAIFIRPGYRFRAVDVLMTNFHLPRSTLFMLVCAFAGYDRMRDAYAHAVADGYRFYSYGDACLLHRAPVAGEQGL</sequence>
<evidence type="ECO:0000255" key="1">
    <source>
        <dbReference type="HAMAP-Rule" id="MF_00113"/>
    </source>
</evidence>
<evidence type="ECO:0000305" key="2"/>
<organism>
    <name type="scientific">Gluconacetobacter diazotrophicus (strain ATCC 49037 / DSM 5601 / CCUG 37298 / CIP 103539 / LMG 7603 / PAl5)</name>
    <dbReference type="NCBI Taxonomy" id="272568"/>
    <lineage>
        <taxon>Bacteria</taxon>
        <taxon>Pseudomonadati</taxon>
        <taxon>Pseudomonadota</taxon>
        <taxon>Alphaproteobacteria</taxon>
        <taxon>Acetobacterales</taxon>
        <taxon>Acetobacteraceae</taxon>
        <taxon>Gluconacetobacter</taxon>
    </lineage>
</organism>
<reference key="1">
    <citation type="journal article" date="2009" name="BMC Genomics">
        <title>Complete genome sequence of the sugarcane nitrogen-fixing endophyte Gluconacetobacter diazotrophicus Pal5.</title>
        <authorList>
            <person name="Bertalan M."/>
            <person name="Albano R."/>
            <person name="de Padua V."/>
            <person name="Rouws L."/>
            <person name="Rojas C."/>
            <person name="Hemerly A."/>
            <person name="Teixeira K."/>
            <person name="Schwab S."/>
            <person name="Araujo J."/>
            <person name="Oliveira A."/>
            <person name="Franca L."/>
            <person name="Magalhaes V."/>
            <person name="Alqueres S."/>
            <person name="Cardoso A."/>
            <person name="Almeida W."/>
            <person name="Loureiro M.M."/>
            <person name="Nogueira E."/>
            <person name="Cidade D."/>
            <person name="Oliveira D."/>
            <person name="Simao T."/>
            <person name="Macedo J."/>
            <person name="Valadao A."/>
            <person name="Dreschsel M."/>
            <person name="Freitas F."/>
            <person name="Vidal M."/>
            <person name="Guedes H."/>
            <person name="Rodrigues E."/>
            <person name="Meneses C."/>
            <person name="Brioso P."/>
            <person name="Pozzer L."/>
            <person name="Figueiredo D."/>
            <person name="Montano H."/>
            <person name="Junior J."/>
            <person name="de Souza Filho G."/>
            <person name="Martin Quintana Flores V."/>
            <person name="Ferreira B."/>
            <person name="Branco A."/>
            <person name="Gonzalez P."/>
            <person name="Guillobel H."/>
            <person name="Lemos M."/>
            <person name="Seibel L."/>
            <person name="Macedo J."/>
            <person name="Alves-Ferreira M."/>
            <person name="Sachetto-Martins G."/>
            <person name="Coelho A."/>
            <person name="Santos E."/>
            <person name="Amaral G."/>
            <person name="Neves A."/>
            <person name="Pacheco A.B."/>
            <person name="Carvalho D."/>
            <person name="Lery L."/>
            <person name="Bisch P."/>
            <person name="Rossle S.C."/>
            <person name="Urmenyi T."/>
            <person name="Rael Pereira A."/>
            <person name="Silva R."/>
            <person name="Rondinelli E."/>
            <person name="von Kruger W."/>
            <person name="Martins O."/>
            <person name="Baldani J.I."/>
            <person name="Ferreira P.C."/>
        </authorList>
    </citation>
    <scope>NUCLEOTIDE SEQUENCE [LARGE SCALE GENOMIC DNA]</scope>
    <source>
        <strain>ATCC 49037 / DSM 5601 / CCUG 37298 / CIP 103539 / LMG 7603 / PAl5</strain>
    </source>
</reference>
<reference key="2">
    <citation type="journal article" date="2010" name="Stand. Genomic Sci.">
        <title>Two genome sequences of the same bacterial strain, Gluconacetobacter diazotrophicus PAl 5, suggest a new standard in genome sequence submission.</title>
        <authorList>
            <person name="Giongo A."/>
            <person name="Tyler H.L."/>
            <person name="Zipperer U.N."/>
            <person name="Triplett E.W."/>
        </authorList>
    </citation>
    <scope>NUCLEOTIDE SEQUENCE [LARGE SCALE GENOMIC DNA]</scope>
    <source>
        <strain>ATCC 49037 / DSM 5601 / CCUG 37298 / CIP 103539 / LMG 7603 / PAl5</strain>
    </source>
</reference>